<accession>A6T0H2</accession>
<sequence>MMKNQLAGLMKQAQAMQDNMKKMQDQLASIEVEGQSGAGLVKVVMSCKNDVKRVSIDPSLLADDKDMLEDLVAAAFNDAVRKAEATSQEKMSGVTAGMPLPPGFKMPF</sequence>
<organism>
    <name type="scientific">Janthinobacterium sp. (strain Marseille)</name>
    <name type="common">Minibacterium massiliensis</name>
    <dbReference type="NCBI Taxonomy" id="375286"/>
    <lineage>
        <taxon>Bacteria</taxon>
        <taxon>Pseudomonadati</taxon>
        <taxon>Pseudomonadota</taxon>
        <taxon>Betaproteobacteria</taxon>
        <taxon>Burkholderiales</taxon>
        <taxon>Oxalobacteraceae</taxon>
        <taxon>Janthinobacterium</taxon>
    </lineage>
</organism>
<reference key="1">
    <citation type="journal article" date="2007" name="PLoS Genet.">
        <title>Genome analysis of Minibacterium massiliensis highlights the convergent evolution of water-living bacteria.</title>
        <authorList>
            <person name="Audic S."/>
            <person name="Robert C."/>
            <person name="Campagna B."/>
            <person name="Parinello H."/>
            <person name="Claverie J.-M."/>
            <person name="Raoult D."/>
            <person name="Drancourt M."/>
        </authorList>
    </citation>
    <scope>NUCLEOTIDE SEQUENCE [LARGE SCALE GENOMIC DNA]</scope>
    <source>
        <strain>Marseille</strain>
    </source>
</reference>
<gene>
    <name type="ordered locus">mma_2329</name>
</gene>
<protein>
    <recommendedName>
        <fullName evidence="1">Nucleoid-associated protein mma_2329</fullName>
    </recommendedName>
</protein>
<name>Y2329_JANMA</name>
<proteinExistence type="inferred from homology"/>
<keyword id="KW-0963">Cytoplasm</keyword>
<keyword id="KW-0238">DNA-binding</keyword>
<evidence type="ECO:0000255" key="1">
    <source>
        <dbReference type="HAMAP-Rule" id="MF_00274"/>
    </source>
</evidence>
<dbReference type="EMBL" id="CP000269">
    <property type="protein sequence ID" value="ABR89321.1"/>
    <property type="molecule type" value="Genomic_DNA"/>
</dbReference>
<dbReference type="RefSeq" id="WP_012080182.1">
    <property type="nucleotide sequence ID" value="NC_009659.1"/>
</dbReference>
<dbReference type="SMR" id="A6T0H2"/>
<dbReference type="STRING" id="375286.mma_2329"/>
<dbReference type="KEGG" id="mms:mma_2329"/>
<dbReference type="eggNOG" id="COG0718">
    <property type="taxonomic scope" value="Bacteria"/>
</dbReference>
<dbReference type="HOGENOM" id="CLU_140930_0_0_4"/>
<dbReference type="OrthoDB" id="9808738at2"/>
<dbReference type="Proteomes" id="UP000006388">
    <property type="component" value="Chromosome"/>
</dbReference>
<dbReference type="GO" id="GO:0043590">
    <property type="term" value="C:bacterial nucleoid"/>
    <property type="evidence" value="ECO:0007669"/>
    <property type="project" value="UniProtKB-UniRule"/>
</dbReference>
<dbReference type="GO" id="GO:0005829">
    <property type="term" value="C:cytosol"/>
    <property type="evidence" value="ECO:0007669"/>
    <property type="project" value="TreeGrafter"/>
</dbReference>
<dbReference type="GO" id="GO:0003677">
    <property type="term" value="F:DNA binding"/>
    <property type="evidence" value="ECO:0007669"/>
    <property type="project" value="UniProtKB-UniRule"/>
</dbReference>
<dbReference type="FunFam" id="3.30.1310.10:FF:000001">
    <property type="entry name" value="Nucleoid-associated protein YbaB"/>
    <property type="match status" value="1"/>
</dbReference>
<dbReference type="Gene3D" id="3.30.1310.10">
    <property type="entry name" value="Nucleoid-associated protein YbaB-like domain"/>
    <property type="match status" value="1"/>
</dbReference>
<dbReference type="HAMAP" id="MF_00274">
    <property type="entry name" value="DNA_YbaB_EbfC"/>
    <property type="match status" value="1"/>
</dbReference>
<dbReference type="InterPro" id="IPR036894">
    <property type="entry name" value="YbaB-like_sf"/>
</dbReference>
<dbReference type="InterPro" id="IPR004401">
    <property type="entry name" value="YbaB/EbfC"/>
</dbReference>
<dbReference type="NCBIfam" id="TIGR00103">
    <property type="entry name" value="DNA_YbaB_EbfC"/>
    <property type="match status" value="1"/>
</dbReference>
<dbReference type="PANTHER" id="PTHR33449">
    <property type="entry name" value="NUCLEOID-ASSOCIATED PROTEIN YBAB"/>
    <property type="match status" value="1"/>
</dbReference>
<dbReference type="PANTHER" id="PTHR33449:SF1">
    <property type="entry name" value="NUCLEOID-ASSOCIATED PROTEIN YBAB"/>
    <property type="match status" value="1"/>
</dbReference>
<dbReference type="Pfam" id="PF02575">
    <property type="entry name" value="YbaB_DNA_bd"/>
    <property type="match status" value="1"/>
</dbReference>
<dbReference type="PIRSF" id="PIRSF004555">
    <property type="entry name" value="UCP004555"/>
    <property type="match status" value="1"/>
</dbReference>
<dbReference type="SUPFAM" id="SSF82607">
    <property type="entry name" value="YbaB-like"/>
    <property type="match status" value="1"/>
</dbReference>
<feature type="chain" id="PRO_1000003756" description="Nucleoid-associated protein mma_2329">
    <location>
        <begin position="1"/>
        <end position="108"/>
    </location>
</feature>
<comment type="function">
    <text evidence="1">Binds to DNA and alters its conformation. May be involved in regulation of gene expression, nucleoid organization and DNA protection.</text>
</comment>
<comment type="subunit">
    <text evidence="1">Homodimer.</text>
</comment>
<comment type="subcellular location">
    <subcellularLocation>
        <location evidence="1">Cytoplasm</location>
        <location evidence="1">Nucleoid</location>
    </subcellularLocation>
</comment>
<comment type="similarity">
    <text evidence="1">Belongs to the YbaB/EbfC family.</text>
</comment>